<reference key="1">
    <citation type="journal article" date="2005" name="Proc. Natl. Acad. Sci. U.S.A.">
        <title>Whole genome sequence of Staphylococcus saprophyticus reveals the pathogenesis of uncomplicated urinary tract infection.</title>
        <authorList>
            <person name="Kuroda M."/>
            <person name="Yamashita A."/>
            <person name="Hirakawa H."/>
            <person name="Kumano M."/>
            <person name="Morikawa K."/>
            <person name="Higashide M."/>
            <person name="Maruyama A."/>
            <person name="Inose Y."/>
            <person name="Matoba K."/>
            <person name="Toh H."/>
            <person name="Kuhara S."/>
            <person name="Hattori M."/>
            <person name="Ohta T."/>
        </authorList>
    </citation>
    <scope>NUCLEOTIDE SEQUENCE [LARGE SCALE GENOMIC DNA]</scope>
    <source>
        <strain>ATCC 15305 / DSM 20229 / NCIMB 8711 / NCTC 7292 / S-41</strain>
    </source>
</reference>
<evidence type="ECO:0000255" key="1">
    <source>
        <dbReference type="PROSITE-ProRule" id="PRU00977"/>
    </source>
</evidence>
<evidence type="ECO:0000305" key="2"/>
<gene>
    <name type="ordered locus">SSP2268</name>
</gene>
<sequence>MDKHYIYIVKCKDGSLYTGYAKDIEKRIIKHNNGQGAKYTKIRRPVQLVYQEMFDTKSEALKREYEIKTFSRQKKLKLISEG</sequence>
<organism>
    <name type="scientific">Staphylococcus saprophyticus subsp. saprophyticus (strain ATCC 15305 / DSM 20229 / NCIMB 8711 / NCTC 7292 / S-41)</name>
    <dbReference type="NCBI Taxonomy" id="342451"/>
    <lineage>
        <taxon>Bacteria</taxon>
        <taxon>Bacillati</taxon>
        <taxon>Bacillota</taxon>
        <taxon>Bacilli</taxon>
        <taxon>Bacillales</taxon>
        <taxon>Staphylococcaceae</taxon>
        <taxon>Staphylococcus</taxon>
    </lineage>
</organism>
<dbReference type="EMBL" id="AP008934">
    <property type="protein sequence ID" value="BAE19413.1"/>
    <property type="molecule type" value="Genomic_DNA"/>
</dbReference>
<dbReference type="RefSeq" id="WP_011303879.1">
    <property type="nucleotide sequence ID" value="NZ_MTGA01000029.1"/>
</dbReference>
<dbReference type="SMR" id="Q49UZ7"/>
<dbReference type="KEGG" id="ssp:SSP2268"/>
<dbReference type="eggNOG" id="COG2827">
    <property type="taxonomic scope" value="Bacteria"/>
</dbReference>
<dbReference type="HOGENOM" id="CLU_135650_0_3_9"/>
<dbReference type="OrthoDB" id="9807770at2"/>
<dbReference type="Proteomes" id="UP000006371">
    <property type="component" value="Chromosome"/>
</dbReference>
<dbReference type="CDD" id="cd10456">
    <property type="entry name" value="GIY-YIG_UPF0213"/>
    <property type="match status" value="1"/>
</dbReference>
<dbReference type="Gene3D" id="3.40.1440.10">
    <property type="entry name" value="GIY-YIG endonuclease"/>
    <property type="match status" value="1"/>
</dbReference>
<dbReference type="InterPro" id="IPR000305">
    <property type="entry name" value="GIY-YIG_endonuc"/>
</dbReference>
<dbReference type="InterPro" id="IPR035901">
    <property type="entry name" value="GIY-YIG_endonuc_sf"/>
</dbReference>
<dbReference type="InterPro" id="IPR050190">
    <property type="entry name" value="UPF0213_domain"/>
</dbReference>
<dbReference type="PANTHER" id="PTHR34477">
    <property type="entry name" value="UPF0213 PROTEIN YHBQ"/>
    <property type="match status" value="1"/>
</dbReference>
<dbReference type="PANTHER" id="PTHR34477:SF1">
    <property type="entry name" value="UPF0213 PROTEIN YHBQ"/>
    <property type="match status" value="1"/>
</dbReference>
<dbReference type="Pfam" id="PF01541">
    <property type="entry name" value="GIY-YIG"/>
    <property type="match status" value="1"/>
</dbReference>
<dbReference type="SMART" id="SM00465">
    <property type="entry name" value="GIYc"/>
    <property type="match status" value="1"/>
</dbReference>
<dbReference type="SUPFAM" id="SSF82771">
    <property type="entry name" value="GIY-YIG endonuclease"/>
    <property type="match status" value="1"/>
</dbReference>
<dbReference type="PROSITE" id="PS50164">
    <property type="entry name" value="GIY_YIG"/>
    <property type="match status" value="1"/>
</dbReference>
<accession>Q49UZ7</accession>
<comment type="similarity">
    <text evidence="2">Belongs to the UPF0213 family.</text>
</comment>
<feature type="chain" id="PRO_0000161389" description="UPF0213 protein SSP2268">
    <location>
        <begin position="1"/>
        <end position="82"/>
    </location>
</feature>
<feature type="domain" description="GIY-YIG" evidence="1">
    <location>
        <begin position="2"/>
        <end position="77"/>
    </location>
</feature>
<proteinExistence type="inferred from homology"/>
<keyword id="KW-1185">Reference proteome</keyword>
<name>Y2268_STAS1</name>
<protein>
    <recommendedName>
        <fullName>UPF0213 protein SSP2268</fullName>
    </recommendedName>
</protein>